<comment type="function">
    <text evidence="1">Involved in the degradation of certain denaturated proteins, including DnaA, during heat shock stress.</text>
</comment>
<comment type="subcellular location">
    <subcellularLocation>
        <location evidence="1">Cytoplasm</location>
    </subcellularLocation>
</comment>
<comment type="similarity">
    <text evidence="1">Belongs to the HspQ family.</text>
</comment>
<sequence length="105" mass="11996">MIASKFGIGQQVRHSLLGYLGVVVDIDPEYSLDEPSPDELAVNDELRAAPWYHVVMEDDDGQPVHTYLAEAQLRSEMRDEHPEQPSMDELARTIRKQLQAPRLRN</sequence>
<evidence type="ECO:0000255" key="1">
    <source>
        <dbReference type="HAMAP-Rule" id="MF_01194"/>
    </source>
</evidence>
<evidence type="ECO:0000256" key="2">
    <source>
        <dbReference type="SAM" id="MobiDB-lite"/>
    </source>
</evidence>
<name>HSPQ_SALA4</name>
<reference key="1">
    <citation type="journal article" date="2011" name="J. Bacteriol.">
        <title>Comparative genomics of 28 Salmonella enterica isolates: evidence for CRISPR-mediated adaptive sublineage evolution.</title>
        <authorList>
            <person name="Fricke W.F."/>
            <person name="Mammel M.K."/>
            <person name="McDermott P.F."/>
            <person name="Tartera C."/>
            <person name="White D.G."/>
            <person name="Leclerc J.E."/>
            <person name="Ravel J."/>
            <person name="Cebula T.A."/>
        </authorList>
    </citation>
    <scope>NUCLEOTIDE SEQUENCE [LARGE SCALE GENOMIC DNA]</scope>
    <source>
        <strain>SL483</strain>
    </source>
</reference>
<organism>
    <name type="scientific">Salmonella agona (strain SL483)</name>
    <dbReference type="NCBI Taxonomy" id="454166"/>
    <lineage>
        <taxon>Bacteria</taxon>
        <taxon>Pseudomonadati</taxon>
        <taxon>Pseudomonadota</taxon>
        <taxon>Gammaproteobacteria</taxon>
        <taxon>Enterobacterales</taxon>
        <taxon>Enterobacteriaceae</taxon>
        <taxon>Salmonella</taxon>
    </lineage>
</organism>
<protein>
    <recommendedName>
        <fullName evidence="1">Heat shock protein HspQ</fullName>
    </recommendedName>
</protein>
<feature type="chain" id="PRO_1000138413" description="Heat shock protein HspQ">
    <location>
        <begin position="1"/>
        <end position="105"/>
    </location>
</feature>
<feature type="region of interest" description="Disordered" evidence="2">
    <location>
        <begin position="76"/>
        <end position="105"/>
    </location>
</feature>
<keyword id="KW-0963">Cytoplasm</keyword>
<keyword id="KW-0346">Stress response</keyword>
<proteinExistence type="inferred from homology"/>
<dbReference type="EMBL" id="CP001138">
    <property type="protein sequence ID" value="ACH51420.1"/>
    <property type="molecule type" value="Genomic_DNA"/>
</dbReference>
<dbReference type="RefSeq" id="WP_000561983.1">
    <property type="nucleotide sequence ID" value="NC_011149.1"/>
</dbReference>
<dbReference type="SMR" id="B5F1W2"/>
<dbReference type="GeneID" id="66755429"/>
<dbReference type="KEGG" id="sea:SeAg_B1037"/>
<dbReference type="HOGENOM" id="CLU_123865_1_0_6"/>
<dbReference type="Proteomes" id="UP000008819">
    <property type="component" value="Chromosome"/>
</dbReference>
<dbReference type="GO" id="GO:0005737">
    <property type="term" value="C:cytoplasm"/>
    <property type="evidence" value="ECO:0007669"/>
    <property type="project" value="UniProtKB-SubCell"/>
</dbReference>
<dbReference type="GO" id="GO:0003677">
    <property type="term" value="F:DNA binding"/>
    <property type="evidence" value="ECO:0007669"/>
    <property type="project" value="InterPro"/>
</dbReference>
<dbReference type="GO" id="GO:0009408">
    <property type="term" value="P:response to heat"/>
    <property type="evidence" value="ECO:0007669"/>
    <property type="project" value="UniProtKB-UniRule"/>
</dbReference>
<dbReference type="Gene3D" id="2.30.30.390">
    <property type="entry name" value="Hemimethylated DNA-binding domain"/>
    <property type="match status" value="1"/>
</dbReference>
<dbReference type="HAMAP" id="MF_01194">
    <property type="entry name" value="HspQ"/>
    <property type="match status" value="1"/>
</dbReference>
<dbReference type="InterPro" id="IPR011722">
    <property type="entry name" value="Hemimethylated_DNA-bd_dom"/>
</dbReference>
<dbReference type="InterPro" id="IPR036623">
    <property type="entry name" value="Hemimethylated_DNA-bd_sf"/>
</dbReference>
<dbReference type="InterPro" id="IPR022866">
    <property type="entry name" value="HspQ"/>
</dbReference>
<dbReference type="NCBIfam" id="NF010729">
    <property type="entry name" value="PRK14129.1"/>
    <property type="match status" value="1"/>
</dbReference>
<dbReference type="NCBIfam" id="TIGR02097">
    <property type="entry name" value="yccV"/>
    <property type="match status" value="1"/>
</dbReference>
<dbReference type="Pfam" id="PF08755">
    <property type="entry name" value="YccV-like"/>
    <property type="match status" value="1"/>
</dbReference>
<dbReference type="SMART" id="SM00992">
    <property type="entry name" value="YccV-like"/>
    <property type="match status" value="1"/>
</dbReference>
<dbReference type="SUPFAM" id="SSF141255">
    <property type="entry name" value="YccV-like"/>
    <property type="match status" value="1"/>
</dbReference>
<accession>B5F1W2</accession>
<gene>
    <name evidence="1" type="primary">hspQ</name>
    <name type="ordered locus">SeAg_B1037</name>
</gene>